<accession>H8F2P4</accession>
<organism>
    <name type="scientific">Mycobacterium tuberculosis (strain ATCC 35801 / TMC 107 / Erdman)</name>
    <dbReference type="NCBI Taxonomy" id="652616"/>
    <lineage>
        <taxon>Bacteria</taxon>
        <taxon>Bacillati</taxon>
        <taxon>Actinomycetota</taxon>
        <taxon>Actinomycetes</taxon>
        <taxon>Mycobacteriales</taxon>
        <taxon>Mycobacteriaceae</taxon>
        <taxon>Mycobacterium</taxon>
        <taxon>Mycobacterium tuberculosis complex</taxon>
    </lineage>
</organism>
<evidence type="ECO:0000250" key="1"/>
<evidence type="ECO:0000255" key="2"/>
<evidence type="ECO:0000269" key="3">
    <source>
    </source>
</evidence>
<evidence type="ECO:0000305" key="4"/>
<proteinExistence type="inferred from homology"/>
<gene>
    <name type="primary">sigM</name>
    <name type="ordered locus">ERDMAN_4291</name>
</gene>
<sequence length="196" mass="21648">MPPPIGYCPAVGFGGRHERSNAELLAAHVAGDRYAFDQLFRRHHRQLHRLARLTSRTSEDADDALQDAMLSAHRGAGSFRYDAAVSSWLHRIVVNACLDRLRRAKAHPTAPLEDVYPVADRTAQVETAIAVQRALMRLPVEQRAAVVAVDMQGYSIADTARMLGVAEGTVKSRCARARARLARLLGYLNTGVNIRR</sequence>
<keyword id="KW-0238">DNA-binding</keyword>
<keyword id="KW-0731">Sigma factor</keyword>
<keyword id="KW-0804">Transcription</keyword>
<keyword id="KW-0805">Transcription regulation</keyword>
<comment type="function">
    <text evidence="1">Sigma factors are initiation factors that promote the attachment of RNA polymerase to specific initiation sites and are then released. Extracytoplasmic function (ECF) sigma factors are held in an inactive form by an anti-sigma factor until released by regulated intramembrane proteolysis (By similarity).</text>
</comment>
<comment type="subunit">
    <text evidence="1">Interacts transiently with the RNA polymerase catalytic core formed by RpoA, RpoB, RpoC and RpoZ (2 alpha, 1 beta, 1 beta' and 1 omega subunit) to form the RNA polymerase holoenzyme that can initiate transcription. Interacts (via sigma-70 factor domain 4) with anti-sigma-M factor RsmA (By similarity).</text>
</comment>
<comment type="domain">
    <text evidence="1">The sigma-70 factor domain-2 mediates sequence-specific interaction with the -10 element in promoter DNA, and plays an important role in melting the double-stranded DNA and the formation of the transcription bubble. The sigma-70 factor domain-2 mediates interaction with the RNA polymerase subunits RpoB and RpoC (By similarity).</text>
</comment>
<comment type="domain">
    <text evidence="1">The sigma-70 factor domain-4 contains a helix-turn-helix (H-T-H) motif that mediates interaction with the -35 element in promoter DNA. The domain also mediates interaction with the RNA polymerase subunit RpoA. Interactions between sigma-70 factor domain-4 and anti-sigma factors prevents interaction of sigma factors with the RNA polymerase catalytic core (By similarity).</text>
</comment>
<comment type="disruption phenotype">
    <text evidence="3">No effect on phenanthroline induction of katG.</text>
</comment>
<comment type="miscellaneous">
    <text evidence="4">Extracytoplasmic function (ECF) sigma factors are held in an inactive form by an anti-sigma factor until released by regulated intramembrane proteolysis (RIP). RIP occurs when an extracytoplasmic signal triggers a concerted proteolytic cascade to transmit information and elicit cellular responses. The membrane-spanning anti-sigma factor is first cut extracytoplasmically (site-1 protease, S1P), then within the membrane itself (site-2 protease, S2P, Rip1), while cytoplasmic proteases finish degrading the regulatory protein, liberating SigM (Probable).</text>
</comment>
<comment type="similarity">
    <text evidence="4">Belongs to the sigma-70 factor family. ECF subfamily.</text>
</comment>
<feature type="chain" id="PRO_0000422694" description="ECF RNA polymerase sigma factor SigM">
    <location>
        <begin position="1"/>
        <end position="196"/>
    </location>
</feature>
<feature type="DNA-binding region" description="H-T-H motif" evidence="2">
    <location>
        <begin position="156"/>
        <end position="175"/>
    </location>
</feature>
<feature type="region of interest" description="Sigma-70 factor domain-2">
    <location>
        <begin position="39"/>
        <end position="105"/>
    </location>
</feature>
<feature type="region of interest" description="Sigma-70 factor domain-4">
    <location>
        <begin position="130"/>
        <end position="181"/>
    </location>
</feature>
<feature type="short sequence motif" description="Interaction with polymerase core subunit RpoC">
    <location>
        <begin position="63"/>
        <end position="66"/>
    </location>
</feature>
<dbReference type="EMBL" id="AP012340">
    <property type="protein sequence ID" value="BAL68055.1"/>
    <property type="molecule type" value="Genomic_DNA"/>
</dbReference>
<dbReference type="RefSeq" id="WP_003899761.1">
    <property type="nucleotide sequence ID" value="NZ_CP172229.1"/>
</dbReference>
<dbReference type="SMR" id="H8F2P4"/>
<dbReference type="KEGG" id="mtn:ERDMAN_4291"/>
<dbReference type="PATRIC" id="fig|652616.3.peg.4373"/>
<dbReference type="HOGENOM" id="CLU_047691_3_0_11"/>
<dbReference type="GO" id="GO:0003677">
    <property type="term" value="F:DNA binding"/>
    <property type="evidence" value="ECO:0007669"/>
    <property type="project" value="UniProtKB-KW"/>
</dbReference>
<dbReference type="GO" id="GO:0016987">
    <property type="term" value="F:sigma factor activity"/>
    <property type="evidence" value="ECO:0007669"/>
    <property type="project" value="UniProtKB-KW"/>
</dbReference>
<dbReference type="GO" id="GO:0006352">
    <property type="term" value="P:DNA-templated transcription initiation"/>
    <property type="evidence" value="ECO:0007669"/>
    <property type="project" value="InterPro"/>
</dbReference>
<dbReference type="FunFam" id="1.10.1740.10:FF:000025">
    <property type="entry name" value="ECF RNA polymerase sigma factor SigM"/>
    <property type="match status" value="1"/>
</dbReference>
<dbReference type="Gene3D" id="1.10.1740.10">
    <property type="match status" value="1"/>
</dbReference>
<dbReference type="Gene3D" id="1.10.10.10">
    <property type="entry name" value="Winged helix-like DNA-binding domain superfamily/Winged helix DNA-binding domain"/>
    <property type="match status" value="1"/>
</dbReference>
<dbReference type="InterPro" id="IPR039425">
    <property type="entry name" value="RNA_pol_sigma-70-like"/>
</dbReference>
<dbReference type="InterPro" id="IPR014284">
    <property type="entry name" value="RNA_pol_sigma-70_dom"/>
</dbReference>
<dbReference type="InterPro" id="IPR007627">
    <property type="entry name" value="RNA_pol_sigma70_r2"/>
</dbReference>
<dbReference type="InterPro" id="IPR013249">
    <property type="entry name" value="RNA_pol_sigma70_r4_t2"/>
</dbReference>
<dbReference type="InterPro" id="IPR013325">
    <property type="entry name" value="RNA_pol_sigma_r2"/>
</dbReference>
<dbReference type="InterPro" id="IPR013324">
    <property type="entry name" value="RNA_pol_sigma_r3/r4-like"/>
</dbReference>
<dbReference type="InterPro" id="IPR036388">
    <property type="entry name" value="WH-like_DNA-bd_sf"/>
</dbReference>
<dbReference type="NCBIfam" id="NF007225">
    <property type="entry name" value="PRK09643.1"/>
    <property type="match status" value="1"/>
</dbReference>
<dbReference type="NCBIfam" id="TIGR02937">
    <property type="entry name" value="sigma70-ECF"/>
    <property type="match status" value="1"/>
</dbReference>
<dbReference type="PANTHER" id="PTHR43133:SF50">
    <property type="entry name" value="ECF RNA POLYMERASE SIGMA FACTOR SIGM"/>
    <property type="match status" value="1"/>
</dbReference>
<dbReference type="PANTHER" id="PTHR43133">
    <property type="entry name" value="RNA POLYMERASE ECF-TYPE SIGMA FACTO"/>
    <property type="match status" value="1"/>
</dbReference>
<dbReference type="Pfam" id="PF04542">
    <property type="entry name" value="Sigma70_r2"/>
    <property type="match status" value="1"/>
</dbReference>
<dbReference type="Pfam" id="PF08281">
    <property type="entry name" value="Sigma70_r4_2"/>
    <property type="match status" value="1"/>
</dbReference>
<dbReference type="SUPFAM" id="SSF88946">
    <property type="entry name" value="Sigma2 domain of RNA polymerase sigma factors"/>
    <property type="match status" value="1"/>
</dbReference>
<dbReference type="SUPFAM" id="SSF88659">
    <property type="entry name" value="Sigma3 and sigma4 domains of RNA polymerase sigma factors"/>
    <property type="match status" value="1"/>
</dbReference>
<reference key="1">
    <citation type="journal article" date="2012" name="J. Bacteriol.">
        <title>Complete annotated genome sequence of Mycobacterium tuberculosis Erdman.</title>
        <authorList>
            <person name="Miyoshi-Akiyama T."/>
            <person name="Matsumura K."/>
            <person name="Iwai H."/>
            <person name="Funatogawa K."/>
            <person name="Kirikae T."/>
        </authorList>
    </citation>
    <scope>NUCLEOTIDE SEQUENCE [LARGE SCALE GENOMIC DNA]</scope>
    <source>
        <strain>ATCC 35801 / TMC 107 / Erdman</strain>
    </source>
</reference>
<reference key="2">
    <citation type="journal article" date="2010" name="Mol. Microbiol.">
        <title>M. tuberculosis intramembrane protease Rip1 controls transcription through three anti-sigma factor substrates.</title>
        <authorList>
            <person name="Sklar J.G."/>
            <person name="Makinoshima H."/>
            <person name="Schneider J.S."/>
            <person name="Glickman M.S."/>
        </authorList>
    </citation>
    <scope>DISRUPTION PHENOTYPE</scope>
    <source>
        <strain>ATCC 35801 / TMC 107 / Erdman</strain>
    </source>
</reference>
<protein>
    <recommendedName>
        <fullName>ECF RNA polymerase sigma factor SigM</fullName>
        <shortName>ECF sigma factor SigM</shortName>
    </recommendedName>
    <alternativeName>
        <fullName>Alternative RNA polymerase sigma factor SigM</fullName>
    </alternativeName>
    <alternativeName>
        <fullName>RNA polymerase sigma-M factor</fullName>
        <shortName>Sigma-M factor</shortName>
    </alternativeName>
</protein>
<name>SIGM_MYCTE</name>